<organism>
    <name type="scientific">Marchantia polymorpha</name>
    <name type="common">Common liverwort</name>
    <name type="synonym">Marchantia aquatica</name>
    <dbReference type="NCBI Taxonomy" id="3197"/>
    <lineage>
        <taxon>Eukaryota</taxon>
        <taxon>Viridiplantae</taxon>
        <taxon>Streptophyta</taxon>
        <taxon>Embryophyta</taxon>
        <taxon>Marchantiophyta</taxon>
        <taxon>Marchantiopsida</taxon>
        <taxon>Marchantiidae</taxon>
        <taxon>Marchantiales</taxon>
        <taxon>Marchantiaceae</taxon>
        <taxon>Marchantia</taxon>
    </lineage>
</organism>
<dbReference type="EMBL" id="X04465">
    <property type="protein sequence ID" value="CAA28113.1"/>
    <property type="molecule type" value="Genomic_DNA"/>
</dbReference>
<dbReference type="PIR" id="S04813">
    <property type="entry name" value="S04813"/>
</dbReference>
<dbReference type="RefSeq" id="NP_039326.1">
    <property type="nucleotide sequence ID" value="NC_001319.1"/>
</dbReference>
<dbReference type="RefSeq" id="YP_009646840.1">
    <property type="nucleotide sequence ID" value="NC_042505.1"/>
</dbReference>
<dbReference type="SMR" id="P12170"/>
<dbReference type="GeneID" id="2702609"/>
<dbReference type="GeneID" id="40386752"/>
<dbReference type="GO" id="GO:0009535">
    <property type="term" value="C:chloroplast thylakoid membrane"/>
    <property type="evidence" value="ECO:0007669"/>
    <property type="project" value="UniProtKB-SubCell"/>
</dbReference>
<dbReference type="GO" id="GO:0015979">
    <property type="term" value="P:photosynthesis"/>
    <property type="evidence" value="ECO:0007669"/>
    <property type="project" value="InterPro"/>
</dbReference>
<dbReference type="HAMAP" id="MF_00293">
    <property type="entry name" value="PSII_PsbN"/>
    <property type="match status" value="1"/>
</dbReference>
<dbReference type="InterPro" id="IPR003398">
    <property type="entry name" value="PSII_PsbN"/>
</dbReference>
<dbReference type="PANTHER" id="PTHR35326">
    <property type="entry name" value="PROTEIN PSBN"/>
    <property type="match status" value="1"/>
</dbReference>
<dbReference type="PANTHER" id="PTHR35326:SF3">
    <property type="entry name" value="PROTEIN PSBN"/>
    <property type="match status" value="1"/>
</dbReference>
<dbReference type="Pfam" id="PF02468">
    <property type="entry name" value="PsbN"/>
    <property type="match status" value="1"/>
</dbReference>
<geneLocation type="chloroplast"/>
<accession>P12170</accession>
<sequence>METATFVAIFISCLLISFTGYALYTAFGQPSNELRDPFEEHED</sequence>
<evidence type="ECO:0000255" key="1">
    <source>
        <dbReference type="HAMAP-Rule" id="MF_00293"/>
    </source>
</evidence>
<protein>
    <recommendedName>
        <fullName evidence="1">Protein PsbN</fullName>
    </recommendedName>
</protein>
<gene>
    <name evidence="1" type="primary">psbN</name>
</gene>
<name>PSBN_MARPO</name>
<feature type="chain" id="PRO_0000207922" description="Protein PsbN">
    <location>
        <begin position="1"/>
        <end position="43"/>
    </location>
</feature>
<feature type="transmembrane region" description="Helical" evidence="1">
    <location>
        <begin position="4"/>
        <end position="24"/>
    </location>
</feature>
<comment type="function">
    <text evidence="1">May play a role in photosystem I and II biogenesis.</text>
</comment>
<comment type="subcellular location">
    <subcellularLocation>
        <location evidence="1">Plastid</location>
        <location evidence="1">Chloroplast thylakoid membrane</location>
        <topology evidence="1">Single-pass membrane protein</topology>
    </subcellularLocation>
</comment>
<comment type="similarity">
    <text evidence="1">Belongs to the PsbN family.</text>
</comment>
<comment type="caution">
    <text evidence="1">Originally thought to be a component of PSII; based on experiments in Synechocystis, N.tabacum and barley, and its absence from PSII in T.elongatus and T.vulcanus, this is probably not true.</text>
</comment>
<reference key="1">
    <citation type="journal article" date="1988" name="J. Mol. Biol.">
        <title>Structure and organization of Marchantia polymorpha chloroplast genome. III. Gene organization of the large single copy region from rbcL to trnI(CAU).</title>
        <authorList>
            <person name="Fukuzawa H."/>
            <person name="Kohchi T."/>
            <person name="Sano T."/>
            <person name="Shirai H."/>
            <person name="Umesono K."/>
            <person name="Inokuchi H."/>
            <person name="Ozeki H."/>
            <person name="Ohyama K."/>
        </authorList>
    </citation>
    <scope>NUCLEOTIDE SEQUENCE [GENOMIC DNA]</scope>
</reference>
<reference key="2">
    <citation type="journal article" date="1986" name="Nature">
        <title>Chloroplast gene organization deduced from complete sequence of liverwort Marchantia polymorpha chloroplast DNA.</title>
        <authorList>
            <person name="Ohyama K."/>
            <person name="Fukuzawa H."/>
            <person name="Kohchi T."/>
            <person name="Shirai H."/>
            <person name="Sano T."/>
            <person name="Sano S."/>
            <person name="Umesono K."/>
            <person name="Shiki Y."/>
            <person name="Takeuchi M."/>
            <person name="Chang Z."/>
            <person name="Aota S."/>
            <person name="Inokuchi H."/>
            <person name="Ozeki H."/>
        </authorList>
    </citation>
    <scope>NUCLEOTIDE SEQUENCE [LARGE SCALE GENOMIC DNA]</scope>
</reference>
<proteinExistence type="inferred from homology"/>
<keyword id="KW-0150">Chloroplast</keyword>
<keyword id="KW-0472">Membrane</keyword>
<keyword id="KW-0934">Plastid</keyword>
<keyword id="KW-0793">Thylakoid</keyword>
<keyword id="KW-0812">Transmembrane</keyword>
<keyword id="KW-1133">Transmembrane helix</keyword>